<protein>
    <recommendedName>
        <fullName>Cytochrome c oxidase subunit 2</fullName>
        <ecNumber>7.1.1.9</ecNumber>
    </recommendedName>
    <alternativeName>
        <fullName>Cytochrome c oxidase polypeptide II</fullName>
    </alternativeName>
</protein>
<geneLocation type="mitochondrion"/>
<keyword id="KW-0186">Copper</keyword>
<keyword id="KW-0249">Electron transport</keyword>
<keyword id="KW-0460">Magnesium</keyword>
<keyword id="KW-0472">Membrane</keyword>
<keyword id="KW-0479">Metal-binding</keyword>
<keyword id="KW-0496">Mitochondrion</keyword>
<keyword id="KW-0999">Mitochondrion inner membrane</keyword>
<keyword id="KW-0597">Phosphoprotein</keyword>
<keyword id="KW-0679">Respiratory chain</keyword>
<keyword id="KW-1278">Translocase</keyword>
<keyword id="KW-0812">Transmembrane</keyword>
<keyword id="KW-1133">Transmembrane helix</keyword>
<keyword id="KW-0813">Transport</keyword>
<proteinExistence type="inferred from homology"/>
<accession>P98039</accession>
<reference key="1">
    <citation type="journal article" date="1994" name="J. Mol. Evol.">
        <title>Evolution of the primate cytochrome c oxidase subunit II gene.</title>
        <authorList>
            <person name="Adkins R.M."/>
            <person name="Honeycutt R.L."/>
        </authorList>
    </citation>
    <scope>NUCLEOTIDE SEQUENCE [GENOMIC DNA]</scope>
</reference>
<comment type="function">
    <text evidence="3">Component of the cytochrome c oxidase, the last enzyme in the mitochondrial electron transport chain which drives oxidative phosphorylation. The respiratory chain contains 3 multisubunit complexes succinate dehydrogenase (complex II, CII), ubiquinol-cytochrome c oxidoreductase (cytochrome b-c1 complex, complex III, CIII) and cytochrome c oxidase (complex IV, CIV), that cooperate to transfer electrons derived from NADH and succinate to molecular oxygen, creating an electrochemical gradient over the inner membrane that drives transmembrane transport and the ATP synthase. Cytochrome c oxidase is the component of the respiratory chain that catalyzes the reduction of oxygen to water. Electrons originating from reduced cytochrome c in the intermembrane space (IMS) are transferred via the dinuclear copper A center (CU(A)) of subunit 2 and heme A of subunit 1 to the active site in subunit 1, a binuclear center (BNC) formed by heme A3 and copper B (CU(B)). The BNC reduces molecular oxygen to 2 water molecules using 4 electrons from cytochrome c in the IMS and 4 protons from the mitochondrial matrix.</text>
</comment>
<comment type="catalytic activity">
    <reaction evidence="3">
        <text>4 Fe(II)-[cytochrome c] + O2 + 8 H(+)(in) = 4 Fe(III)-[cytochrome c] + 2 H2O + 4 H(+)(out)</text>
        <dbReference type="Rhea" id="RHEA:11436"/>
        <dbReference type="Rhea" id="RHEA-COMP:10350"/>
        <dbReference type="Rhea" id="RHEA-COMP:14399"/>
        <dbReference type="ChEBI" id="CHEBI:15377"/>
        <dbReference type="ChEBI" id="CHEBI:15378"/>
        <dbReference type="ChEBI" id="CHEBI:15379"/>
        <dbReference type="ChEBI" id="CHEBI:29033"/>
        <dbReference type="ChEBI" id="CHEBI:29034"/>
        <dbReference type="EC" id="7.1.1.9"/>
    </reaction>
    <physiologicalReaction direction="left-to-right" evidence="3">
        <dbReference type="Rhea" id="RHEA:11437"/>
    </physiologicalReaction>
</comment>
<comment type="cofactor">
    <cofactor evidence="4">
        <name>Cu cation</name>
        <dbReference type="ChEBI" id="CHEBI:23378"/>
    </cofactor>
    <text evidence="4">Binds a dinuclear copper A center per subunit.</text>
</comment>
<comment type="subunit">
    <text evidence="1 4">Component of the cytochrome c oxidase (complex IV, CIV), a multisubunit enzyme composed of 14 subunits. The complex is composed of a catalytic core of 3 subunits MT-CO1, MT-CO2 and MT-CO3, encoded in the mitochondrial DNA, and 11 supernumerary subunits COX4I, COX5A, COX5B, COX6A, COX6B, COX6C, COX7A, COX7B, COX7C, COX8 and NDUFA4, which are encoded in the nuclear genome. The complex exists as a monomer or a dimer and forms supercomplexes (SCs) in the inner mitochondrial membrane with NADH-ubiquinone oxidoreductase (complex I, CI) and ubiquinol-cytochrome c oxidoreductase (cytochrome b-c1 complex, complex III, CIII), resulting in different assemblies (supercomplex SCI(1)III(2)IV(1) and megacomplex MCI(2)III(2)IV(2)) (By similarity). Found in a complex with TMEM177, COA6, COX18, COX20, SCO1 and SCO2. Interacts with TMEM177 in a COX20-dependent manner. Interacts with COX20. Interacts with COX16 (By similarity).</text>
</comment>
<comment type="subcellular location">
    <subcellularLocation>
        <location evidence="4">Mitochondrion inner membrane</location>
        <topology evidence="4">Multi-pass membrane protein</topology>
    </subcellularLocation>
</comment>
<comment type="similarity">
    <text evidence="5">Belongs to the cytochrome c oxidase subunit 2 family.</text>
</comment>
<sequence>MAHPMQLGFQDAASPIMEELLYFHDHTLMIVFMISSLVLYIISLMLSTELTHTSTMDAQEVETVWTILPAVILILIALPSLRILYMMDEINTPSMTLKTMGHQWYWSYEYTDYDNLCFDSYMVTTPDLEPGDLRLLEVDNRVILPTEMSIRMLISSEDVLHSWTVPALGIKTDAIPGRLNQATLMTSRPGIYYGQCSEICGSNHSFMPIVLELVPLKYFEEWLLKSL</sequence>
<name>COX2_NYCCO</name>
<gene>
    <name type="primary">MT-CO2</name>
    <name type="synonym">COII</name>
    <name type="synonym">COX2</name>
    <name type="synonym">COXII</name>
    <name type="synonym">MTCO2</name>
</gene>
<feature type="chain" id="PRO_0000183640" description="Cytochrome c oxidase subunit 2">
    <location>
        <begin position="1"/>
        <end position="227"/>
    </location>
</feature>
<feature type="topological domain" description="Mitochondrial intermembrane" evidence="4">
    <location>
        <begin position="1"/>
        <end position="14"/>
    </location>
</feature>
<feature type="transmembrane region" description="Helical; Name=I" evidence="4">
    <location>
        <begin position="15"/>
        <end position="45"/>
    </location>
</feature>
<feature type="topological domain" description="Mitochondrial matrix" evidence="4">
    <location>
        <begin position="46"/>
        <end position="59"/>
    </location>
</feature>
<feature type="transmembrane region" description="Helical; Name=II" evidence="4">
    <location>
        <begin position="60"/>
        <end position="87"/>
    </location>
</feature>
<feature type="topological domain" description="Mitochondrial intermembrane" evidence="4">
    <location>
        <begin position="88"/>
        <end position="227"/>
    </location>
</feature>
<feature type="binding site" evidence="4">
    <location>
        <position position="161"/>
    </location>
    <ligand>
        <name>Cu cation</name>
        <dbReference type="ChEBI" id="CHEBI:23378"/>
        <label>A1</label>
    </ligand>
</feature>
<feature type="binding site" evidence="4">
    <location>
        <position position="196"/>
    </location>
    <ligand>
        <name>Cu cation</name>
        <dbReference type="ChEBI" id="CHEBI:23378"/>
        <label>A1</label>
    </ligand>
</feature>
<feature type="binding site" evidence="4">
    <location>
        <position position="196"/>
    </location>
    <ligand>
        <name>Cu cation</name>
        <dbReference type="ChEBI" id="CHEBI:23378"/>
        <label>A2</label>
    </ligand>
</feature>
<feature type="binding site" evidence="4">
    <location>
        <position position="198"/>
    </location>
    <ligand>
        <name>Cu cation</name>
        <dbReference type="ChEBI" id="CHEBI:23378"/>
        <label>A2</label>
    </ligand>
</feature>
<feature type="binding site" evidence="4">
    <location>
        <position position="198"/>
    </location>
    <ligand>
        <name>Mg(2+)</name>
        <dbReference type="ChEBI" id="CHEBI:18420"/>
        <note>ligand shared with MT-CO1</note>
    </ligand>
</feature>
<feature type="binding site" evidence="4">
    <location>
        <position position="200"/>
    </location>
    <ligand>
        <name>Cu cation</name>
        <dbReference type="ChEBI" id="CHEBI:23378"/>
        <label>A1</label>
    </ligand>
</feature>
<feature type="binding site" evidence="4">
    <location>
        <position position="200"/>
    </location>
    <ligand>
        <name>Cu cation</name>
        <dbReference type="ChEBI" id="CHEBI:23378"/>
        <label>A2</label>
    </ligand>
</feature>
<feature type="binding site" evidence="4">
    <location>
        <position position="204"/>
    </location>
    <ligand>
        <name>Cu cation</name>
        <dbReference type="ChEBI" id="CHEBI:23378"/>
        <label>A2</label>
    </ligand>
</feature>
<feature type="binding site" evidence="4">
    <location>
        <position position="207"/>
    </location>
    <ligand>
        <name>Cu cation</name>
        <dbReference type="ChEBI" id="CHEBI:23378"/>
        <label>A1</label>
    </ligand>
</feature>
<feature type="modified residue" description="Phosphotyrosine" evidence="2">
    <location>
        <position position="218"/>
    </location>
</feature>
<organism>
    <name type="scientific">Nycticebus coucang</name>
    <name type="common">Slow loris</name>
    <dbReference type="NCBI Taxonomy" id="9470"/>
    <lineage>
        <taxon>Eukaryota</taxon>
        <taxon>Metazoa</taxon>
        <taxon>Chordata</taxon>
        <taxon>Craniata</taxon>
        <taxon>Vertebrata</taxon>
        <taxon>Euteleostomi</taxon>
        <taxon>Mammalia</taxon>
        <taxon>Eutheria</taxon>
        <taxon>Euarchontoglires</taxon>
        <taxon>Primates</taxon>
        <taxon>Strepsirrhini</taxon>
        <taxon>Lorisiformes</taxon>
        <taxon>Lorisidae</taxon>
        <taxon>Nycticebus</taxon>
    </lineage>
</organism>
<evidence type="ECO:0000250" key="1">
    <source>
        <dbReference type="UniProtKB" id="P00403"/>
    </source>
</evidence>
<evidence type="ECO:0000250" key="2">
    <source>
        <dbReference type="UniProtKB" id="P00406"/>
    </source>
</evidence>
<evidence type="ECO:0000250" key="3">
    <source>
        <dbReference type="UniProtKB" id="P00410"/>
    </source>
</evidence>
<evidence type="ECO:0000250" key="4">
    <source>
        <dbReference type="UniProtKB" id="P68530"/>
    </source>
</evidence>
<evidence type="ECO:0000305" key="5"/>
<dbReference type="EC" id="7.1.1.9"/>
<dbReference type="EMBL" id="L22781">
    <property type="protein sequence ID" value="AAA20568.1"/>
    <property type="molecule type" value="Genomic_DNA"/>
</dbReference>
<dbReference type="PIR" id="I61842">
    <property type="entry name" value="I61842"/>
</dbReference>
<dbReference type="RefSeq" id="NP_114350.1">
    <property type="nucleotide sequence ID" value="NC_002765.1"/>
</dbReference>
<dbReference type="SMR" id="P98039"/>
<dbReference type="GeneID" id="803054"/>
<dbReference type="CTD" id="4513"/>
<dbReference type="GO" id="GO:0005743">
    <property type="term" value="C:mitochondrial inner membrane"/>
    <property type="evidence" value="ECO:0007669"/>
    <property type="project" value="UniProtKB-SubCell"/>
</dbReference>
<dbReference type="GO" id="GO:0045277">
    <property type="term" value="C:respiratory chain complex IV"/>
    <property type="evidence" value="ECO:0000250"/>
    <property type="project" value="UniProtKB"/>
</dbReference>
<dbReference type="GO" id="GO:0005507">
    <property type="term" value="F:copper ion binding"/>
    <property type="evidence" value="ECO:0007669"/>
    <property type="project" value="InterPro"/>
</dbReference>
<dbReference type="GO" id="GO:0004129">
    <property type="term" value="F:cytochrome-c oxidase activity"/>
    <property type="evidence" value="ECO:0007669"/>
    <property type="project" value="UniProtKB-EC"/>
</dbReference>
<dbReference type="GO" id="GO:0042773">
    <property type="term" value="P:ATP synthesis coupled electron transport"/>
    <property type="evidence" value="ECO:0007669"/>
    <property type="project" value="TreeGrafter"/>
</dbReference>
<dbReference type="CDD" id="cd13912">
    <property type="entry name" value="CcO_II_C"/>
    <property type="match status" value="1"/>
</dbReference>
<dbReference type="FunFam" id="1.10.287.90:FF:000001">
    <property type="entry name" value="Cytochrome c oxidase subunit 2"/>
    <property type="match status" value="1"/>
</dbReference>
<dbReference type="FunFam" id="2.60.40.420:FF:000001">
    <property type="entry name" value="Cytochrome c oxidase subunit 2"/>
    <property type="match status" value="1"/>
</dbReference>
<dbReference type="Gene3D" id="1.10.287.90">
    <property type="match status" value="1"/>
</dbReference>
<dbReference type="Gene3D" id="2.60.40.420">
    <property type="entry name" value="Cupredoxins - blue copper proteins"/>
    <property type="match status" value="1"/>
</dbReference>
<dbReference type="InterPro" id="IPR045187">
    <property type="entry name" value="CcO_II"/>
</dbReference>
<dbReference type="InterPro" id="IPR002429">
    <property type="entry name" value="CcO_II-like_C"/>
</dbReference>
<dbReference type="InterPro" id="IPR034210">
    <property type="entry name" value="CcO_II_C"/>
</dbReference>
<dbReference type="InterPro" id="IPR001505">
    <property type="entry name" value="Copper_CuA"/>
</dbReference>
<dbReference type="InterPro" id="IPR008972">
    <property type="entry name" value="Cupredoxin"/>
</dbReference>
<dbReference type="InterPro" id="IPR014222">
    <property type="entry name" value="Cyt_c_oxidase_su2"/>
</dbReference>
<dbReference type="InterPro" id="IPR011759">
    <property type="entry name" value="Cyt_c_oxidase_su2_TM_dom"/>
</dbReference>
<dbReference type="InterPro" id="IPR036257">
    <property type="entry name" value="Cyt_c_oxidase_su2_TM_sf"/>
</dbReference>
<dbReference type="NCBIfam" id="TIGR02866">
    <property type="entry name" value="CoxB"/>
    <property type="match status" value="1"/>
</dbReference>
<dbReference type="PANTHER" id="PTHR22888:SF9">
    <property type="entry name" value="CYTOCHROME C OXIDASE SUBUNIT 2"/>
    <property type="match status" value="1"/>
</dbReference>
<dbReference type="PANTHER" id="PTHR22888">
    <property type="entry name" value="CYTOCHROME C OXIDASE, SUBUNIT II"/>
    <property type="match status" value="1"/>
</dbReference>
<dbReference type="Pfam" id="PF00116">
    <property type="entry name" value="COX2"/>
    <property type="match status" value="1"/>
</dbReference>
<dbReference type="Pfam" id="PF02790">
    <property type="entry name" value="COX2_TM"/>
    <property type="match status" value="1"/>
</dbReference>
<dbReference type="PRINTS" id="PR01166">
    <property type="entry name" value="CYCOXIDASEII"/>
</dbReference>
<dbReference type="SUPFAM" id="SSF49503">
    <property type="entry name" value="Cupredoxins"/>
    <property type="match status" value="1"/>
</dbReference>
<dbReference type="SUPFAM" id="SSF81464">
    <property type="entry name" value="Cytochrome c oxidase subunit II-like, transmembrane region"/>
    <property type="match status" value="1"/>
</dbReference>
<dbReference type="PROSITE" id="PS00078">
    <property type="entry name" value="COX2"/>
    <property type="match status" value="1"/>
</dbReference>
<dbReference type="PROSITE" id="PS50857">
    <property type="entry name" value="COX2_CUA"/>
    <property type="match status" value="1"/>
</dbReference>
<dbReference type="PROSITE" id="PS50999">
    <property type="entry name" value="COX2_TM"/>
    <property type="match status" value="1"/>
</dbReference>